<comment type="subcellular location">
    <subcellularLocation>
        <location evidence="2">Endoplasmic reticulum membrane</location>
        <topology evidence="2">Single-pass type II membrane protein</topology>
    </subcellularLocation>
</comment>
<comment type="PTM">
    <text evidence="1">Among the many cysteines in the lumenal domain, most are probably involved in disulfide bonds.</text>
</comment>
<comment type="similarity">
    <text evidence="4">Belongs to the DIPK family.</text>
</comment>
<sequence length="428" mass="48592">MARGLFSRAWLSKTHHFQARLSYIRVKYLFLTWLAVFVSSWVVYVQYSTYTELCRGRECKSIICDKYSKGIIDGSACSSLCEESKLYFGRCLSTKPNNQVYTGSWGDQDGVIKCQLSDVLHYELGEELEPKKEITLFEKPTRGTSVEKFKEMVASHLKAKVGEQANLSNLVSLILSVADSNKDGHISLPEAKSAWALLQLNEVLLAVVLQGREHTPKLLGFCGDLYVVERVPHAPLFGITLPWPMDLWIPAGMRRSMDQWFTPSWPRKAKIFIGLLELIEDIFHGTFGSFLMCDMRASSFGYTDRHDLRLVDGRRVVAEEAFKQAMILQRCKDHEDCVYGADCRTSCDLSEQRCTAEVAQPNLARACGAMKDYLLRGAPFHLQEELEKQLYACMALKGSAEQMEMEHSLILNNLKTLLWKQISHTTDS</sequence>
<name>DIK1A_DANRE</name>
<keyword id="KW-1015">Disulfide bond</keyword>
<keyword id="KW-0256">Endoplasmic reticulum</keyword>
<keyword id="KW-0472">Membrane</keyword>
<keyword id="KW-1185">Reference proteome</keyword>
<keyword id="KW-0735">Signal-anchor</keyword>
<keyword id="KW-0812">Transmembrane</keyword>
<keyword id="KW-1133">Transmembrane helix</keyword>
<reference key="1">
    <citation type="submission" date="2006-06" db="EMBL/GenBank/DDBJ databases">
        <authorList>
            <consortium name="NIH - Zebrafish Gene Collection (ZGC) project"/>
        </authorList>
    </citation>
    <scope>NUCLEOTIDE SEQUENCE [LARGE SCALE MRNA]</scope>
</reference>
<evidence type="ECO:0000250" key="1"/>
<evidence type="ECO:0000250" key="2">
    <source>
        <dbReference type="UniProtKB" id="Q9D6I7"/>
    </source>
</evidence>
<evidence type="ECO:0000255" key="3"/>
<evidence type="ECO:0000305" key="4"/>
<dbReference type="EMBL" id="BC115333">
    <property type="protein sequence ID" value="AAI15334.1"/>
    <property type="molecule type" value="mRNA"/>
</dbReference>
<dbReference type="RefSeq" id="NP_001035444.1">
    <property type="nucleotide sequence ID" value="NM_001040354.1"/>
</dbReference>
<dbReference type="FunCoup" id="Q1RLQ5">
    <property type="interactions" value="294"/>
</dbReference>
<dbReference type="PaxDb" id="7955-ENSDARP00000086003"/>
<dbReference type="Ensembl" id="ENSDART00000091570">
    <property type="protein sequence ID" value="ENSDARP00000086003"/>
    <property type="gene ID" value="ENSDARG00000062955"/>
</dbReference>
<dbReference type="GeneID" id="678606"/>
<dbReference type="KEGG" id="dre:678606"/>
<dbReference type="AGR" id="ZFIN:ZDB-GENE-060421-4286"/>
<dbReference type="CTD" id="678606"/>
<dbReference type="ZFIN" id="ZDB-GENE-060421-4286">
    <property type="gene designation" value="dipk1aa"/>
</dbReference>
<dbReference type="eggNOG" id="ENOG502RPQV">
    <property type="taxonomic scope" value="Eukaryota"/>
</dbReference>
<dbReference type="HOGENOM" id="CLU_039177_0_0_1"/>
<dbReference type="InParanoid" id="Q1RLQ5"/>
<dbReference type="OMA" id="TMRVLKC"/>
<dbReference type="OrthoDB" id="8860232at2759"/>
<dbReference type="PhylomeDB" id="Q1RLQ5"/>
<dbReference type="TreeFam" id="TF313319"/>
<dbReference type="PRO" id="PR:Q1RLQ5"/>
<dbReference type="Proteomes" id="UP000000437">
    <property type="component" value="Chromosome 2"/>
</dbReference>
<dbReference type="Bgee" id="ENSDARG00000062955">
    <property type="expression patterns" value="Expressed in testis and 20 other cell types or tissues"/>
</dbReference>
<dbReference type="GO" id="GO:0005789">
    <property type="term" value="C:endoplasmic reticulum membrane"/>
    <property type="evidence" value="ECO:0007669"/>
    <property type="project" value="UniProtKB-SubCell"/>
</dbReference>
<dbReference type="InterPro" id="IPR022049">
    <property type="entry name" value="FAM69_kinase_dom"/>
</dbReference>
<dbReference type="InterPro" id="IPR029244">
    <property type="entry name" value="FAM69_N"/>
</dbReference>
<dbReference type="PANTHER" id="PTHR21093:SF8">
    <property type="entry name" value="DIVERGENT PROTEIN KINASE DOMAIN 1A"/>
    <property type="match status" value="1"/>
</dbReference>
<dbReference type="PANTHER" id="PTHR21093">
    <property type="entry name" value="DIVERGENT PROTEIN KINASE DOMAIN 1C-RELATED"/>
    <property type="match status" value="1"/>
</dbReference>
<dbReference type="Pfam" id="PF12260">
    <property type="entry name" value="PIP49_C"/>
    <property type="match status" value="1"/>
</dbReference>
<dbReference type="Pfam" id="PF14875">
    <property type="entry name" value="PIP49_N"/>
    <property type="match status" value="1"/>
</dbReference>
<dbReference type="SMART" id="SM01299">
    <property type="entry name" value="PIP49_N"/>
    <property type="match status" value="1"/>
</dbReference>
<proteinExistence type="evidence at transcript level"/>
<protein>
    <recommendedName>
        <fullName>Divergent protein kinase domain 1A</fullName>
    </recommendedName>
    <alternativeName>
        <fullName>Protein FAM69A</fullName>
    </alternativeName>
</protein>
<feature type="chain" id="PRO_0000282426" description="Divergent protein kinase domain 1A">
    <location>
        <begin position="1"/>
        <end position="428"/>
    </location>
</feature>
<feature type="topological domain" description="Cytoplasmic" evidence="3">
    <location>
        <begin position="1"/>
        <end position="27"/>
    </location>
</feature>
<feature type="transmembrane region" description="Helical" evidence="3">
    <location>
        <begin position="28"/>
        <end position="48"/>
    </location>
</feature>
<feature type="topological domain" description="Lumenal" evidence="3">
    <location>
        <begin position="49"/>
        <end position="428"/>
    </location>
</feature>
<accession>Q1RLQ5</accession>
<gene>
    <name type="primary">dipk1a</name>
    <name type="synonym">fam69a</name>
    <name type="ORF">zgc:136922</name>
</gene>
<organism>
    <name type="scientific">Danio rerio</name>
    <name type="common">Zebrafish</name>
    <name type="synonym">Brachydanio rerio</name>
    <dbReference type="NCBI Taxonomy" id="7955"/>
    <lineage>
        <taxon>Eukaryota</taxon>
        <taxon>Metazoa</taxon>
        <taxon>Chordata</taxon>
        <taxon>Craniata</taxon>
        <taxon>Vertebrata</taxon>
        <taxon>Euteleostomi</taxon>
        <taxon>Actinopterygii</taxon>
        <taxon>Neopterygii</taxon>
        <taxon>Teleostei</taxon>
        <taxon>Ostariophysi</taxon>
        <taxon>Cypriniformes</taxon>
        <taxon>Danionidae</taxon>
        <taxon>Danioninae</taxon>
        <taxon>Danio</taxon>
    </lineage>
</organism>